<evidence type="ECO:0000255" key="1">
    <source>
        <dbReference type="HAMAP-Rule" id="MF_00558"/>
    </source>
</evidence>
<proteinExistence type="inferred from homology"/>
<gene>
    <name evidence="1" type="primary">sucC</name>
    <name type="ordered locus">MLBr00155</name>
</gene>
<protein>
    <recommendedName>
        <fullName evidence="1">Succinate--CoA ligase [ADP-forming] subunit beta</fullName>
        <ecNumber evidence="1">6.2.1.5</ecNumber>
    </recommendedName>
    <alternativeName>
        <fullName evidence="1">Succinyl-CoA synthetase subunit beta</fullName>
        <shortName evidence="1">SCS-beta</shortName>
    </alternativeName>
</protein>
<sequence>MDLFEYQAKELFAKHGVPGIQGRVTDSAEGAKTIAMEIGRPVMVKAQVKTGGRGKAGGVKYAATPEEAYQQAKNILGLDIKGHIVKKLLVVEASDIAEEYYLSFLLDRANRTYLAMCSVEGGMEIEEVAATKPERLAKVSVDAVKGVDLACARSIAQQGHLPAEVLDAAAATIAKLWELFVAEDATLVEVNPLVRTPSRGYGSSGKILALDGKVTLDANARFRQPGHAEFEDRAATDPLEWKAKQHNLNYIKLDGEVGIIGNGAGLTMSTFDVVAYAGEQHGGVKPANFLDIGGGASAEVMAASLDVVLGDVQVKSVFVNIFGGITTCDTVATGIVKALEILGDEANKPLVVRLDGNNVGEGRRILAEANHPLVMLVPTMDEAANKAAELART</sequence>
<keyword id="KW-0067">ATP-binding</keyword>
<keyword id="KW-0436">Ligase</keyword>
<keyword id="KW-0460">Magnesium</keyword>
<keyword id="KW-0479">Metal-binding</keyword>
<keyword id="KW-0547">Nucleotide-binding</keyword>
<keyword id="KW-0816">Tricarboxylic acid cycle</keyword>
<feature type="chain" id="PRO_1000197709" description="Succinate--CoA ligase [ADP-forming] subunit beta">
    <location>
        <begin position="1"/>
        <end position="393"/>
    </location>
</feature>
<feature type="domain" description="ATP-grasp" evidence="1">
    <location>
        <begin position="9"/>
        <end position="242"/>
    </location>
</feature>
<feature type="binding site" evidence="1">
    <location>
        <position position="45"/>
    </location>
    <ligand>
        <name>ATP</name>
        <dbReference type="ChEBI" id="CHEBI:30616"/>
    </ligand>
</feature>
<feature type="binding site" evidence="1">
    <location>
        <begin position="52"/>
        <end position="54"/>
    </location>
    <ligand>
        <name>ATP</name>
        <dbReference type="ChEBI" id="CHEBI:30616"/>
    </ligand>
</feature>
<feature type="binding site" evidence="1">
    <location>
        <position position="94"/>
    </location>
    <ligand>
        <name>ATP</name>
        <dbReference type="ChEBI" id="CHEBI:30616"/>
    </ligand>
</feature>
<feature type="binding site" evidence="1">
    <location>
        <position position="99"/>
    </location>
    <ligand>
        <name>ATP</name>
        <dbReference type="ChEBI" id="CHEBI:30616"/>
    </ligand>
</feature>
<feature type="binding site" evidence="1">
    <location>
        <position position="191"/>
    </location>
    <ligand>
        <name>Mg(2+)</name>
        <dbReference type="ChEBI" id="CHEBI:18420"/>
    </ligand>
</feature>
<feature type="binding site" evidence="1">
    <location>
        <position position="211"/>
    </location>
    <ligand>
        <name>Mg(2+)</name>
        <dbReference type="ChEBI" id="CHEBI:18420"/>
    </ligand>
</feature>
<feature type="binding site" evidence="1">
    <location>
        <position position="262"/>
    </location>
    <ligand>
        <name>substrate</name>
        <note>ligand shared with subunit alpha</note>
    </ligand>
</feature>
<feature type="binding site" evidence="1">
    <location>
        <begin position="324"/>
        <end position="326"/>
    </location>
    <ligand>
        <name>substrate</name>
        <note>ligand shared with subunit alpha</note>
    </ligand>
</feature>
<comment type="function">
    <text evidence="1">Succinyl-CoA synthetase functions in the citric acid cycle (TCA), coupling the hydrolysis of succinyl-CoA to the synthesis of either ATP or GTP and thus represents the only step of substrate-level phosphorylation in the TCA. The beta subunit provides nucleotide specificity of the enzyme and binds the substrate succinate, while the binding sites for coenzyme A and phosphate are found in the alpha subunit.</text>
</comment>
<comment type="catalytic activity">
    <reaction evidence="1">
        <text>succinate + ATP + CoA = succinyl-CoA + ADP + phosphate</text>
        <dbReference type="Rhea" id="RHEA:17661"/>
        <dbReference type="ChEBI" id="CHEBI:30031"/>
        <dbReference type="ChEBI" id="CHEBI:30616"/>
        <dbReference type="ChEBI" id="CHEBI:43474"/>
        <dbReference type="ChEBI" id="CHEBI:57287"/>
        <dbReference type="ChEBI" id="CHEBI:57292"/>
        <dbReference type="ChEBI" id="CHEBI:456216"/>
        <dbReference type="EC" id="6.2.1.5"/>
    </reaction>
    <physiologicalReaction direction="right-to-left" evidence="1">
        <dbReference type="Rhea" id="RHEA:17663"/>
    </physiologicalReaction>
</comment>
<comment type="catalytic activity">
    <reaction evidence="1">
        <text>GTP + succinate + CoA = succinyl-CoA + GDP + phosphate</text>
        <dbReference type="Rhea" id="RHEA:22120"/>
        <dbReference type="ChEBI" id="CHEBI:30031"/>
        <dbReference type="ChEBI" id="CHEBI:37565"/>
        <dbReference type="ChEBI" id="CHEBI:43474"/>
        <dbReference type="ChEBI" id="CHEBI:57287"/>
        <dbReference type="ChEBI" id="CHEBI:57292"/>
        <dbReference type="ChEBI" id="CHEBI:58189"/>
    </reaction>
    <physiologicalReaction direction="right-to-left" evidence="1">
        <dbReference type="Rhea" id="RHEA:22122"/>
    </physiologicalReaction>
</comment>
<comment type="cofactor">
    <cofactor evidence="1">
        <name>Mg(2+)</name>
        <dbReference type="ChEBI" id="CHEBI:18420"/>
    </cofactor>
    <text evidence="1">Binds 1 Mg(2+) ion per subunit.</text>
</comment>
<comment type="pathway">
    <text evidence="1">Carbohydrate metabolism; tricarboxylic acid cycle; succinate from succinyl-CoA (ligase route): step 1/1.</text>
</comment>
<comment type="subunit">
    <text evidence="1">Heterotetramer of two alpha and two beta subunits.</text>
</comment>
<comment type="similarity">
    <text evidence="1">Belongs to the succinate/malate CoA ligase beta subunit family.</text>
</comment>
<reference key="1">
    <citation type="journal article" date="2009" name="Nat. Genet.">
        <title>Comparative genomic and phylogeographic analysis of Mycobacterium leprae.</title>
        <authorList>
            <person name="Monot M."/>
            <person name="Honore N."/>
            <person name="Garnier T."/>
            <person name="Zidane N."/>
            <person name="Sherafi D."/>
            <person name="Paniz-Mondolfi A."/>
            <person name="Matsuoka M."/>
            <person name="Taylor G.M."/>
            <person name="Donoghue H.D."/>
            <person name="Bouwman A."/>
            <person name="Mays S."/>
            <person name="Watson C."/>
            <person name="Lockwood D."/>
            <person name="Khamispour A."/>
            <person name="Dowlati Y."/>
            <person name="Jianping S."/>
            <person name="Rea T.H."/>
            <person name="Vera-Cabrera L."/>
            <person name="Stefani M.M."/>
            <person name="Banu S."/>
            <person name="Macdonald M."/>
            <person name="Sapkota B.R."/>
            <person name="Spencer J.S."/>
            <person name="Thomas J."/>
            <person name="Harshman K."/>
            <person name="Singh P."/>
            <person name="Busso P."/>
            <person name="Gattiker A."/>
            <person name="Rougemont J."/>
            <person name="Brennan P.J."/>
            <person name="Cole S.T."/>
        </authorList>
    </citation>
    <scope>NUCLEOTIDE SEQUENCE [LARGE SCALE GENOMIC DNA]</scope>
    <source>
        <strain>Br4923</strain>
    </source>
</reference>
<organism>
    <name type="scientific">Mycobacterium leprae (strain Br4923)</name>
    <dbReference type="NCBI Taxonomy" id="561304"/>
    <lineage>
        <taxon>Bacteria</taxon>
        <taxon>Bacillati</taxon>
        <taxon>Actinomycetota</taxon>
        <taxon>Actinomycetes</taxon>
        <taxon>Mycobacteriales</taxon>
        <taxon>Mycobacteriaceae</taxon>
        <taxon>Mycobacterium</taxon>
    </lineage>
</organism>
<dbReference type="EC" id="6.2.1.5" evidence="1"/>
<dbReference type="EMBL" id="FM211192">
    <property type="protein sequence ID" value="CAR70248.1"/>
    <property type="molecule type" value="Genomic_DNA"/>
</dbReference>
<dbReference type="SMR" id="B8ZU00"/>
<dbReference type="KEGG" id="mlb:MLBr00155"/>
<dbReference type="HOGENOM" id="CLU_037430_4_0_11"/>
<dbReference type="UniPathway" id="UPA00223">
    <property type="reaction ID" value="UER00999"/>
</dbReference>
<dbReference type="Proteomes" id="UP000006900">
    <property type="component" value="Chromosome"/>
</dbReference>
<dbReference type="GO" id="GO:0005829">
    <property type="term" value="C:cytosol"/>
    <property type="evidence" value="ECO:0007669"/>
    <property type="project" value="TreeGrafter"/>
</dbReference>
<dbReference type="GO" id="GO:0042709">
    <property type="term" value="C:succinate-CoA ligase complex"/>
    <property type="evidence" value="ECO:0007669"/>
    <property type="project" value="TreeGrafter"/>
</dbReference>
<dbReference type="GO" id="GO:0005524">
    <property type="term" value="F:ATP binding"/>
    <property type="evidence" value="ECO:0007669"/>
    <property type="project" value="UniProtKB-UniRule"/>
</dbReference>
<dbReference type="GO" id="GO:0000287">
    <property type="term" value="F:magnesium ion binding"/>
    <property type="evidence" value="ECO:0007669"/>
    <property type="project" value="UniProtKB-UniRule"/>
</dbReference>
<dbReference type="GO" id="GO:0004775">
    <property type="term" value="F:succinate-CoA ligase (ADP-forming) activity"/>
    <property type="evidence" value="ECO:0007669"/>
    <property type="project" value="UniProtKB-UniRule"/>
</dbReference>
<dbReference type="GO" id="GO:0004776">
    <property type="term" value="F:succinate-CoA ligase (GDP-forming) activity"/>
    <property type="evidence" value="ECO:0007669"/>
    <property type="project" value="RHEA"/>
</dbReference>
<dbReference type="GO" id="GO:0006104">
    <property type="term" value="P:succinyl-CoA metabolic process"/>
    <property type="evidence" value="ECO:0007669"/>
    <property type="project" value="TreeGrafter"/>
</dbReference>
<dbReference type="GO" id="GO:0006099">
    <property type="term" value="P:tricarboxylic acid cycle"/>
    <property type="evidence" value="ECO:0007669"/>
    <property type="project" value="UniProtKB-UniRule"/>
</dbReference>
<dbReference type="FunFam" id="3.30.1490.20:FF:000014">
    <property type="entry name" value="Succinate--CoA ligase [ADP-forming] subunit beta"/>
    <property type="match status" value="1"/>
</dbReference>
<dbReference type="FunFam" id="3.30.470.20:FF:000002">
    <property type="entry name" value="Succinate--CoA ligase [ADP-forming] subunit beta"/>
    <property type="match status" value="1"/>
</dbReference>
<dbReference type="FunFam" id="3.40.50.261:FF:000007">
    <property type="entry name" value="Succinate--CoA ligase [ADP-forming] subunit beta"/>
    <property type="match status" value="1"/>
</dbReference>
<dbReference type="Gene3D" id="3.30.1490.20">
    <property type="entry name" value="ATP-grasp fold, A domain"/>
    <property type="match status" value="1"/>
</dbReference>
<dbReference type="Gene3D" id="3.30.470.20">
    <property type="entry name" value="ATP-grasp fold, B domain"/>
    <property type="match status" value="1"/>
</dbReference>
<dbReference type="Gene3D" id="3.40.50.261">
    <property type="entry name" value="Succinyl-CoA synthetase domains"/>
    <property type="match status" value="1"/>
</dbReference>
<dbReference type="HAMAP" id="MF_00558">
    <property type="entry name" value="Succ_CoA_beta"/>
    <property type="match status" value="1"/>
</dbReference>
<dbReference type="InterPro" id="IPR011761">
    <property type="entry name" value="ATP-grasp"/>
</dbReference>
<dbReference type="InterPro" id="IPR013650">
    <property type="entry name" value="ATP-grasp_succ-CoA_synth-type"/>
</dbReference>
<dbReference type="InterPro" id="IPR013815">
    <property type="entry name" value="ATP_grasp_subdomain_1"/>
</dbReference>
<dbReference type="InterPro" id="IPR017866">
    <property type="entry name" value="Succ-CoA_synthase_bsu_CS"/>
</dbReference>
<dbReference type="InterPro" id="IPR005811">
    <property type="entry name" value="SUCC_ACL_C"/>
</dbReference>
<dbReference type="InterPro" id="IPR005809">
    <property type="entry name" value="Succ_CoA_ligase-like_bsu"/>
</dbReference>
<dbReference type="InterPro" id="IPR016102">
    <property type="entry name" value="Succinyl-CoA_synth-like"/>
</dbReference>
<dbReference type="NCBIfam" id="NF001913">
    <property type="entry name" value="PRK00696.1"/>
    <property type="match status" value="1"/>
</dbReference>
<dbReference type="NCBIfam" id="TIGR01016">
    <property type="entry name" value="sucCoAbeta"/>
    <property type="match status" value="1"/>
</dbReference>
<dbReference type="PANTHER" id="PTHR11815:SF10">
    <property type="entry name" value="SUCCINATE--COA LIGASE [GDP-FORMING] SUBUNIT BETA, MITOCHONDRIAL"/>
    <property type="match status" value="1"/>
</dbReference>
<dbReference type="PANTHER" id="PTHR11815">
    <property type="entry name" value="SUCCINYL-COA SYNTHETASE BETA CHAIN"/>
    <property type="match status" value="1"/>
</dbReference>
<dbReference type="Pfam" id="PF08442">
    <property type="entry name" value="ATP-grasp_2"/>
    <property type="match status" value="1"/>
</dbReference>
<dbReference type="Pfam" id="PF00549">
    <property type="entry name" value="Ligase_CoA"/>
    <property type="match status" value="1"/>
</dbReference>
<dbReference type="PIRSF" id="PIRSF001554">
    <property type="entry name" value="SucCS_beta"/>
    <property type="match status" value="1"/>
</dbReference>
<dbReference type="SUPFAM" id="SSF56059">
    <property type="entry name" value="Glutathione synthetase ATP-binding domain-like"/>
    <property type="match status" value="1"/>
</dbReference>
<dbReference type="SUPFAM" id="SSF52210">
    <property type="entry name" value="Succinyl-CoA synthetase domains"/>
    <property type="match status" value="1"/>
</dbReference>
<dbReference type="PROSITE" id="PS50975">
    <property type="entry name" value="ATP_GRASP"/>
    <property type="match status" value="1"/>
</dbReference>
<dbReference type="PROSITE" id="PS01217">
    <property type="entry name" value="SUCCINYL_COA_LIG_3"/>
    <property type="match status" value="1"/>
</dbReference>
<accession>B8ZU00</accession>
<name>SUCC_MYCLB</name>